<accession>B1LC43</accession>
<gene>
    <name evidence="1" type="primary">ispG</name>
    <name type="ordered locus">TRQ2_0036</name>
</gene>
<reference key="1">
    <citation type="journal article" date="2011" name="J. Bacteriol.">
        <title>Genome sequence of Thermotoga sp. strain RQ2, a hyperthermophilic bacterium isolated from a geothermally heated region of the seafloor near Ribeira Quente, the Azores.</title>
        <authorList>
            <person name="Swithers K.S."/>
            <person name="DiPippo J.L."/>
            <person name="Bruce D.C."/>
            <person name="Detter C."/>
            <person name="Tapia R."/>
            <person name="Han S."/>
            <person name="Saunders E."/>
            <person name="Goodwin L.A."/>
            <person name="Han J."/>
            <person name="Woyke T."/>
            <person name="Pitluck S."/>
            <person name="Pennacchio L."/>
            <person name="Nolan M."/>
            <person name="Mikhailova N."/>
            <person name="Lykidis A."/>
            <person name="Land M.L."/>
            <person name="Brettin T."/>
            <person name="Stetter K.O."/>
            <person name="Nelson K.E."/>
            <person name="Gogarten J.P."/>
            <person name="Noll K.M."/>
        </authorList>
    </citation>
    <scope>NUCLEOTIDE SEQUENCE [LARGE SCALE GENOMIC DNA]</scope>
    <source>
        <strain>RQ2</strain>
    </source>
</reference>
<protein>
    <recommendedName>
        <fullName evidence="1">4-hydroxy-3-methylbut-2-en-1-yl diphosphate synthase (flavodoxin)</fullName>
        <ecNumber evidence="1">1.17.7.3</ecNumber>
    </recommendedName>
    <alternativeName>
        <fullName evidence="1">1-hydroxy-2-methyl-2-(E)-butenyl 4-diphosphate synthase</fullName>
    </alternativeName>
</protein>
<keyword id="KW-0004">4Fe-4S</keyword>
<keyword id="KW-0408">Iron</keyword>
<keyword id="KW-0411">Iron-sulfur</keyword>
<keyword id="KW-0414">Isoprene biosynthesis</keyword>
<keyword id="KW-0479">Metal-binding</keyword>
<keyword id="KW-0560">Oxidoreductase</keyword>
<evidence type="ECO:0000255" key="1">
    <source>
        <dbReference type="HAMAP-Rule" id="MF_00159"/>
    </source>
</evidence>
<organism>
    <name type="scientific">Thermotoga sp. (strain RQ2)</name>
    <dbReference type="NCBI Taxonomy" id="126740"/>
    <lineage>
        <taxon>Bacteria</taxon>
        <taxon>Thermotogati</taxon>
        <taxon>Thermotogota</taxon>
        <taxon>Thermotogae</taxon>
        <taxon>Thermotogales</taxon>
        <taxon>Thermotogaceae</taxon>
        <taxon>Thermotoga</taxon>
    </lineage>
</organism>
<proteinExistence type="inferred from homology"/>
<sequence>MRKSVKVGNVVIGGGAPVSVQSMTTTKTADVERTISQIKRLERAGCEIIRVAVQDEEDAKAIRRIKEQIEIPLVADIQFDYRLAILSIDNGADKIRINPGNMSRDRLKDVVAAAKGKGIPIRVGANVGSIKRRTSERWKDLAESALEEVRLLEKEGFYDIVVSVKSSDILETIKANEYIAEKIEYPIHLGVTEAGVSETAVVKSSIAIGHLLLKNIGDTIRVSISGDPVREVIVGKKILIALGLREGVEVIACPTCGRAEIDVENMAKMIEENFFHVQKRLKIAVMGCVVNGIGEGKDADLGVAGLRDGAVIFVKGEIKERVSKEFVLERLKHYLNELLEEVER</sequence>
<name>ISPG_THESQ</name>
<dbReference type="EC" id="1.17.7.3" evidence="1"/>
<dbReference type="EMBL" id="CP000969">
    <property type="protein sequence ID" value="ACB08398.1"/>
    <property type="molecule type" value="Genomic_DNA"/>
</dbReference>
<dbReference type="RefSeq" id="WP_011942742.1">
    <property type="nucleotide sequence ID" value="NC_010483.1"/>
</dbReference>
<dbReference type="SMR" id="B1LC43"/>
<dbReference type="KEGG" id="trq:TRQ2_0036"/>
<dbReference type="HOGENOM" id="CLU_042258_0_0_0"/>
<dbReference type="UniPathway" id="UPA00056">
    <property type="reaction ID" value="UER00096"/>
</dbReference>
<dbReference type="Proteomes" id="UP000001687">
    <property type="component" value="Chromosome"/>
</dbReference>
<dbReference type="GO" id="GO:0051539">
    <property type="term" value="F:4 iron, 4 sulfur cluster binding"/>
    <property type="evidence" value="ECO:0007669"/>
    <property type="project" value="UniProtKB-UniRule"/>
</dbReference>
<dbReference type="GO" id="GO:0046429">
    <property type="term" value="F:4-hydroxy-3-methylbut-2-en-1-yl diphosphate synthase activity (ferredoxin)"/>
    <property type="evidence" value="ECO:0007669"/>
    <property type="project" value="UniProtKB-UniRule"/>
</dbReference>
<dbReference type="GO" id="GO:0141197">
    <property type="term" value="F:4-hydroxy-3-methylbut-2-enyl-diphosphate synthase activity (flavodoxin)"/>
    <property type="evidence" value="ECO:0007669"/>
    <property type="project" value="UniProtKB-EC"/>
</dbReference>
<dbReference type="GO" id="GO:0005506">
    <property type="term" value="F:iron ion binding"/>
    <property type="evidence" value="ECO:0007669"/>
    <property type="project" value="InterPro"/>
</dbReference>
<dbReference type="GO" id="GO:0019288">
    <property type="term" value="P:isopentenyl diphosphate biosynthetic process, methylerythritol 4-phosphate pathway"/>
    <property type="evidence" value="ECO:0007669"/>
    <property type="project" value="UniProtKB-UniRule"/>
</dbReference>
<dbReference type="GO" id="GO:0016114">
    <property type="term" value="P:terpenoid biosynthetic process"/>
    <property type="evidence" value="ECO:0007669"/>
    <property type="project" value="InterPro"/>
</dbReference>
<dbReference type="FunFam" id="3.20.20.20:FF:000001">
    <property type="entry name" value="4-hydroxy-3-methylbut-2-en-1-yl diphosphate synthase (flavodoxin)"/>
    <property type="match status" value="1"/>
</dbReference>
<dbReference type="Gene3D" id="3.20.20.20">
    <property type="entry name" value="Dihydropteroate synthase-like"/>
    <property type="match status" value="1"/>
</dbReference>
<dbReference type="Gene3D" id="3.30.413.10">
    <property type="entry name" value="Sulfite Reductase Hemoprotein, domain 1"/>
    <property type="match status" value="1"/>
</dbReference>
<dbReference type="HAMAP" id="MF_00159">
    <property type="entry name" value="IspG"/>
    <property type="match status" value="1"/>
</dbReference>
<dbReference type="InterPro" id="IPR011005">
    <property type="entry name" value="Dihydropteroate_synth-like_sf"/>
</dbReference>
<dbReference type="InterPro" id="IPR016425">
    <property type="entry name" value="IspG_bac"/>
</dbReference>
<dbReference type="InterPro" id="IPR004588">
    <property type="entry name" value="IspG_bac-typ"/>
</dbReference>
<dbReference type="InterPro" id="IPR045854">
    <property type="entry name" value="NO2/SO3_Rdtase_4Fe4S_sf"/>
</dbReference>
<dbReference type="NCBIfam" id="TIGR00612">
    <property type="entry name" value="ispG_gcpE"/>
    <property type="match status" value="1"/>
</dbReference>
<dbReference type="NCBIfam" id="NF001540">
    <property type="entry name" value="PRK00366.1"/>
    <property type="match status" value="1"/>
</dbReference>
<dbReference type="PANTHER" id="PTHR30454">
    <property type="entry name" value="4-HYDROXY-3-METHYLBUT-2-EN-1-YL DIPHOSPHATE SYNTHASE"/>
    <property type="match status" value="1"/>
</dbReference>
<dbReference type="PANTHER" id="PTHR30454:SF0">
    <property type="entry name" value="4-HYDROXY-3-METHYLBUT-2-EN-1-YL DIPHOSPHATE SYNTHASE (FERREDOXIN), CHLOROPLASTIC"/>
    <property type="match status" value="1"/>
</dbReference>
<dbReference type="Pfam" id="PF04551">
    <property type="entry name" value="GcpE"/>
    <property type="match status" value="1"/>
</dbReference>
<dbReference type="PIRSF" id="PIRSF004640">
    <property type="entry name" value="IspG"/>
    <property type="match status" value="1"/>
</dbReference>
<dbReference type="SUPFAM" id="SSF51717">
    <property type="entry name" value="Dihydropteroate synthetase-like"/>
    <property type="match status" value="1"/>
</dbReference>
<dbReference type="SUPFAM" id="SSF56014">
    <property type="entry name" value="Nitrite and sulphite reductase 4Fe-4S domain-like"/>
    <property type="match status" value="1"/>
</dbReference>
<feature type="chain" id="PRO_1000097192" description="4-hydroxy-3-methylbut-2-en-1-yl diphosphate synthase (flavodoxin)">
    <location>
        <begin position="1"/>
        <end position="344"/>
    </location>
</feature>
<feature type="binding site" evidence="1">
    <location>
        <position position="253"/>
    </location>
    <ligand>
        <name>[4Fe-4S] cluster</name>
        <dbReference type="ChEBI" id="CHEBI:49883"/>
    </ligand>
</feature>
<feature type="binding site" evidence="1">
    <location>
        <position position="256"/>
    </location>
    <ligand>
        <name>[4Fe-4S] cluster</name>
        <dbReference type="ChEBI" id="CHEBI:49883"/>
    </ligand>
</feature>
<feature type="binding site" evidence="1">
    <location>
        <position position="288"/>
    </location>
    <ligand>
        <name>[4Fe-4S] cluster</name>
        <dbReference type="ChEBI" id="CHEBI:49883"/>
    </ligand>
</feature>
<feature type="binding site" evidence="1">
    <location>
        <position position="295"/>
    </location>
    <ligand>
        <name>[4Fe-4S] cluster</name>
        <dbReference type="ChEBI" id="CHEBI:49883"/>
    </ligand>
</feature>
<comment type="function">
    <text evidence="1">Converts 2C-methyl-D-erythritol 2,4-cyclodiphosphate (ME-2,4cPP) into 1-hydroxy-2-methyl-2-(E)-butenyl 4-diphosphate.</text>
</comment>
<comment type="catalytic activity">
    <reaction evidence="1">
        <text>(2E)-4-hydroxy-3-methylbut-2-enyl diphosphate + oxidized [flavodoxin] + H2O + 2 H(+) = 2-C-methyl-D-erythritol 2,4-cyclic diphosphate + reduced [flavodoxin]</text>
        <dbReference type="Rhea" id="RHEA:43604"/>
        <dbReference type="Rhea" id="RHEA-COMP:10622"/>
        <dbReference type="Rhea" id="RHEA-COMP:10623"/>
        <dbReference type="ChEBI" id="CHEBI:15377"/>
        <dbReference type="ChEBI" id="CHEBI:15378"/>
        <dbReference type="ChEBI" id="CHEBI:57618"/>
        <dbReference type="ChEBI" id="CHEBI:58210"/>
        <dbReference type="ChEBI" id="CHEBI:58483"/>
        <dbReference type="ChEBI" id="CHEBI:128753"/>
        <dbReference type="EC" id="1.17.7.3"/>
    </reaction>
</comment>
<comment type="cofactor">
    <cofactor evidence="1">
        <name>[4Fe-4S] cluster</name>
        <dbReference type="ChEBI" id="CHEBI:49883"/>
    </cofactor>
    <text evidence="1">Binds 1 [4Fe-4S] cluster.</text>
</comment>
<comment type="pathway">
    <text evidence="1">Isoprenoid biosynthesis; isopentenyl diphosphate biosynthesis via DXP pathway; isopentenyl diphosphate from 1-deoxy-D-xylulose 5-phosphate: step 5/6.</text>
</comment>
<comment type="similarity">
    <text evidence="1">Belongs to the IspG family.</text>
</comment>